<organism>
    <name type="scientific">Stenotrophomonas maltophilia (strain R551-3)</name>
    <dbReference type="NCBI Taxonomy" id="391008"/>
    <lineage>
        <taxon>Bacteria</taxon>
        <taxon>Pseudomonadati</taxon>
        <taxon>Pseudomonadota</taxon>
        <taxon>Gammaproteobacteria</taxon>
        <taxon>Lysobacterales</taxon>
        <taxon>Lysobacteraceae</taxon>
        <taxon>Stenotrophomonas</taxon>
        <taxon>Stenotrophomonas maltophilia group</taxon>
    </lineage>
</organism>
<dbReference type="EMBL" id="CP001111">
    <property type="protein sequence ID" value="ACF50457.1"/>
    <property type="molecule type" value="Genomic_DNA"/>
</dbReference>
<dbReference type="RefSeq" id="WP_004145321.1">
    <property type="nucleotide sequence ID" value="NC_011071.1"/>
</dbReference>
<dbReference type="SMR" id="B4SKV9"/>
<dbReference type="STRING" id="391008.Smal_0752"/>
<dbReference type="GeneID" id="97259930"/>
<dbReference type="KEGG" id="smt:Smal_0752"/>
<dbReference type="eggNOG" id="COG0049">
    <property type="taxonomic scope" value="Bacteria"/>
</dbReference>
<dbReference type="HOGENOM" id="CLU_072226_1_1_6"/>
<dbReference type="OrthoDB" id="9807653at2"/>
<dbReference type="Proteomes" id="UP000001867">
    <property type="component" value="Chromosome"/>
</dbReference>
<dbReference type="GO" id="GO:0015935">
    <property type="term" value="C:small ribosomal subunit"/>
    <property type="evidence" value="ECO:0007669"/>
    <property type="project" value="InterPro"/>
</dbReference>
<dbReference type="GO" id="GO:0019843">
    <property type="term" value="F:rRNA binding"/>
    <property type="evidence" value="ECO:0007669"/>
    <property type="project" value="UniProtKB-UniRule"/>
</dbReference>
<dbReference type="GO" id="GO:0003735">
    <property type="term" value="F:structural constituent of ribosome"/>
    <property type="evidence" value="ECO:0007669"/>
    <property type="project" value="InterPro"/>
</dbReference>
<dbReference type="GO" id="GO:0000049">
    <property type="term" value="F:tRNA binding"/>
    <property type="evidence" value="ECO:0007669"/>
    <property type="project" value="UniProtKB-UniRule"/>
</dbReference>
<dbReference type="GO" id="GO:0006412">
    <property type="term" value="P:translation"/>
    <property type="evidence" value="ECO:0007669"/>
    <property type="project" value="UniProtKB-UniRule"/>
</dbReference>
<dbReference type="CDD" id="cd14869">
    <property type="entry name" value="uS7_Bacteria"/>
    <property type="match status" value="1"/>
</dbReference>
<dbReference type="FunFam" id="1.10.455.10:FF:000001">
    <property type="entry name" value="30S ribosomal protein S7"/>
    <property type="match status" value="1"/>
</dbReference>
<dbReference type="Gene3D" id="1.10.455.10">
    <property type="entry name" value="Ribosomal protein S7 domain"/>
    <property type="match status" value="1"/>
</dbReference>
<dbReference type="HAMAP" id="MF_00480_B">
    <property type="entry name" value="Ribosomal_uS7_B"/>
    <property type="match status" value="1"/>
</dbReference>
<dbReference type="InterPro" id="IPR000235">
    <property type="entry name" value="Ribosomal_uS7"/>
</dbReference>
<dbReference type="InterPro" id="IPR005717">
    <property type="entry name" value="Ribosomal_uS7_bac/org-type"/>
</dbReference>
<dbReference type="InterPro" id="IPR020606">
    <property type="entry name" value="Ribosomal_uS7_CS"/>
</dbReference>
<dbReference type="InterPro" id="IPR023798">
    <property type="entry name" value="Ribosomal_uS7_dom"/>
</dbReference>
<dbReference type="InterPro" id="IPR036823">
    <property type="entry name" value="Ribosomal_uS7_dom_sf"/>
</dbReference>
<dbReference type="NCBIfam" id="TIGR01029">
    <property type="entry name" value="rpsG_bact"/>
    <property type="match status" value="1"/>
</dbReference>
<dbReference type="PANTHER" id="PTHR11205">
    <property type="entry name" value="RIBOSOMAL PROTEIN S7"/>
    <property type="match status" value="1"/>
</dbReference>
<dbReference type="Pfam" id="PF00177">
    <property type="entry name" value="Ribosomal_S7"/>
    <property type="match status" value="1"/>
</dbReference>
<dbReference type="PIRSF" id="PIRSF002122">
    <property type="entry name" value="RPS7p_RPS7a_RPS5e_RPS7o"/>
    <property type="match status" value="1"/>
</dbReference>
<dbReference type="SUPFAM" id="SSF47973">
    <property type="entry name" value="Ribosomal protein S7"/>
    <property type="match status" value="1"/>
</dbReference>
<dbReference type="PROSITE" id="PS00052">
    <property type="entry name" value="RIBOSOMAL_S7"/>
    <property type="match status" value="1"/>
</dbReference>
<keyword id="KW-0687">Ribonucleoprotein</keyword>
<keyword id="KW-0689">Ribosomal protein</keyword>
<keyword id="KW-0694">RNA-binding</keyword>
<keyword id="KW-0699">rRNA-binding</keyword>
<keyword id="KW-0820">tRNA-binding</keyword>
<sequence>MSRKGNTPQRSVLPDPKHGSETIARFINMVMQSGKKSVAEKIVYGAMDVITEKNSSANAIELVQKALDNVAPAVEVKSRRVGGATYQVPVEVRSSRKMALAMRWLIDSARKRGENTMPKKLAAELIDASENRGGAIKKREETHRMAEANKAFAHYRW</sequence>
<comment type="function">
    <text evidence="1">One of the primary rRNA binding proteins, it binds directly to 16S rRNA where it nucleates assembly of the head domain of the 30S subunit. Is located at the subunit interface close to the decoding center, probably blocks exit of the E-site tRNA.</text>
</comment>
<comment type="subunit">
    <text evidence="1">Part of the 30S ribosomal subunit. Contacts proteins S9 and S11.</text>
</comment>
<comment type="similarity">
    <text evidence="1">Belongs to the universal ribosomal protein uS7 family.</text>
</comment>
<reference key="1">
    <citation type="submission" date="2008-06" db="EMBL/GenBank/DDBJ databases">
        <title>Complete sequence of Stenotrophomonas maltophilia R551-3.</title>
        <authorList>
            <consortium name="US DOE Joint Genome Institute"/>
            <person name="Lucas S."/>
            <person name="Copeland A."/>
            <person name="Lapidus A."/>
            <person name="Glavina del Rio T."/>
            <person name="Dalin E."/>
            <person name="Tice H."/>
            <person name="Pitluck S."/>
            <person name="Chain P."/>
            <person name="Malfatti S."/>
            <person name="Shin M."/>
            <person name="Vergez L."/>
            <person name="Lang D."/>
            <person name="Schmutz J."/>
            <person name="Larimer F."/>
            <person name="Land M."/>
            <person name="Hauser L."/>
            <person name="Kyrpides N."/>
            <person name="Mikhailova N."/>
            <person name="Taghavi S."/>
            <person name="Monchy S."/>
            <person name="Newman L."/>
            <person name="Vangronsveld J."/>
            <person name="van der Lelie D."/>
            <person name="Richardson P."/>
        </authorList>
    </citation>
    <scope>NUCLEOTIDE SEQUENCE [LARGE SCALE GENOMIC DNA]</scope>
    <source>
        <strain>R551-3</strain>
    </source>
</reference>
<gene>
    <name evidence="1" type="primary">rpsG</name>
    <name type="ordered locus">Smal_0752</name>
</gene>
<protein>
    <recommendedName>
        <fullName evidence="1">Small ribosomal subunit protein uS7</fullName>
    </recommendedName>
    <alternativeName>
        <fullName evidence="2">30S ribosomal protein S7</fullName>
    </alternativeName>
</protein>
<name>RS7_STRM5</name>
<feature type="chain" id="PRO_1000126006" description="Small ribosomal subunit protein uS7">
    <location>
        <begin position="1"/>
        <end position="157"/>
    </location>
</feature>
<accession>B4SKV9</accession>
<evidence type="ECO:0000255" key="1">
    <source>
        <dbReference type="HAMAP-Rule" id="MF_00480"/>
    </source>
</evidence>
<evidence type="ECO:0000305" key="2"/>
<proteinExistence type="inferred from homology"/>